<dbReference type="EC" id="7.1.1.-" evidence="1"/>
<dbReference type="EMBL" id="CP001622">
    <property type="protein sequence ID" value="ACS55655.1"/>
    <property type="molecule type" value="Genomic_DNA"/>
</dbReference>
<dbReference type="SMR" id="C6AUT0"/>
<dbReference type="KEGG" id="rlg:Rleg_1363"/>
<dbReference type="HOGENOM" id="CLU_144724_2_0_5"/>
<dbReference type="OrthoDB" id="9811124at2"/>
<dbReference type="Proteomes" id="UP000002256">
    <property type="component" value="Chromosome"/>
</dbReference>
<dbReference type="GO" id="GO:0030964">
    <property type="term" value="C:NADH dehydrogenase complex"/>
    <property type="evidence" value="ECO:0007669"/>
    <property type="project" value="TreeGrafter"/>
</dbReference>
<dbReference type="GO" id="GO:0005886">
    <property type="term" value="C:plasma membrane"/>
    <property type="evidence" value="ECO:0007669"/>
    <property type="project" value="UniProtKB-SubCell"/>
</dbReference>
<dbReference type="GO" id="GO:0050136">
    <property type="term" value="F:NADH:ubiquinone reductase (non-electrogenic) activity"/>
    <property type="evidence" value="ECO:0007669"/>
    <property type="project" value="UniProtKB-UniRule"/>
</dbReference>
<dbReference type="GO" id="GO:0048038">
    <property type="term" value="F:quinone binding"/>
    <property type="evidence" value="ECO:0007669"/>
    <property type="project" value="UniProtKB-KW"/>
</dbReference>
<dbReference type="GO" id="GO:0042773">
    <property type="term" value="P:ATP synthesis coupled electron transport"/>
    <property type="evidence" value="ECO:0007669"/>
    <property type="project" value="InterPro"/>
</dbReference>
<dbReference type="FunFam" id="1.10.287.3510:FF:000001">
    <property type="entry name" value="NADH-quinone oxidoreductase subunit K"/>
    <property type="match status" value="1"/>
</dbReference>
<dbReference type="Gene3D" id="1.10.287.3510">
    <property type="match status" value="1"/>
</dbReference>
<dbReference type="HAMAP" id="MF_01456">
    <property type="entry name" value="NDH1_NuoK"/>
    <property type="match status" value="1"/>
</dbReference>
<dbReference type="InterPro" id="IPR001133">
    <property type="entry name" value="NADH_UbQ_OxRdtase_chain4L/K"/>
</dbReference>
<dbReference type="InterPro" id="IPR039428">
    <property type="entry name" value="NUOK/Mnh_C1-like"/>
</dbReference>
<dbReference type="NCBIfam" id="NF004320">
    <property type="entry name" value="PRK05715.1-2"/>
    <property type="match status" value="1"/>
</dbReference>
<dbReference type="NCBIfam" id="NF004321">
    <property type="entry name" value="PRK05715.1-3"/>
    <property type="match status" value="1"/>
</dbReference>
<dbReference type="NCBIfam" id="NF004323">
    <property type="entry name" value="PRK05715.1-5"/>
    <property type="match status" value="1"/>
</dbReference>
<dbReference type="PANTHER" id="PTHR11434:SF21">
    <property type="entry name" value="NADH DEHYDROGENASE SUBUNIT 4L-RELATED"/>
    <property type="match status" value="1"/>
</dbReference>
<dbReference type="PANTHER" id="PTHR11434">
    <property type="entry name" value="NADH-UBIQUINONE OXIDOREDUCTASE SUBUNIT ND4L"/>
    <property type="match status" value="1"/>
</dbReference>
<dbReference type="Pfam" id="PF00420">
    <property type="entry name" value="Oxidored_q2"/>
    <property type="match status" value="1"/>
</dbReference>
<proteinExistence type="inferred from homology"/>
<comment type="function">
    <text evidence="1">NDH-1 shuttles electrons from NADH, via FMN and iron-sulfur (Fe-S) centers, to quinones in the respiratory chain. The immediate electron acceptor for the enzyme in this species is believed to be ubiquinone. Couples the redox reaction to proton translocation (for every two electrons transferred, four hydrogen ions are translocated across the cytoplasmic membrane), and thus conserves the redox energy in a proton gradient.</text>
</comment>
<comment type="catalytic activity">
    <reaction evidence="1">
        <text>a quinone + NADH + 5 H(+)(in) = a quinol + NAD(+) + 4 H(+)(out)</text>
        <dbReference type="Rhea" id="RHEA:57888"/>
        <dbReference type="ChEBI" id="CHEBI:15378"/>
        <dbReference type="ChEBI" id="CHEBI:24646"/>
        <dbReference type="ChEBI" id="CHEBI:57540"/>
        <dbReference type="ChEBI" id="CHEBI:57945"/>
        <dbReference type="ChEBI" id="CHEBI:132124"/>
    </reaction>
</comment>
<comment type="subunit">
    <text evidence="1">NDH-1 is composed of 14 different subunits. Subunits NuoA, H, J, K, L, M, N constitute the membrane sector of the complex.</text>
</comment>
<comment type="subcellular location">
    <subcellularLocation>
        <location evidence="1">Cell inner membrane</location>
        <topology evidence="1">Multi-pass membrane protein</topology>
    </subcellularLocation>
</comment>
<comment type="similarity">
    <text evidence="1">Belongs to the complex I subunit 4L family.</text>
</comment>
<reference key="1">
    <citation type="journal article" date="2010" name="Stand. Genomic Sci.">
        <title>Complete genome sequence of Rhizobium leguminosarum bv. trifolii strain WSM1325, an effective microsymbiont of annual Mediterranean clovers.</title>
        <authorList>
            <person name="Reeve W."/>
            <person name="O'Hara G."/>
            <person name="Chain P."/>
            <person name="Ardley J."/>
            <person name="Brau L."/>
            <person name="Nandesena K."/>
            <person name="Tiwari R."/>
            <person name="Copeland A."/>
            <person name="Nolan M."/>
            <person name="Han C."/>
            <person name="Brettin T."/>
            <person name="Land M."/>
            <person name="Ovchinikova G."/>
            <person name="Ivanova N."/>
            <person name="Mavromatis K."/>
            <person name="Markowitz V."/>
            <person name="Kyrpides N."/>
            <person name="Melino V."/>
            <person name="Denton M."/>
            <person name="Yates R."/>
            <person name="Howieson J."/>
        </authorList>
    </citation>
    <scope>NUCLEOTIDE SEQUENCE [LARGE SCALE GENOMIC DNA]</scope>
    <source>
        <strain>WSM1325</strain>
    </source>
</reference>
<gene>
    <name evidence="1" type="primary">nuoK</name>
    <name type="ordered locus">Rleg_1363</name>
</gene>
<feature type="chain" id="PRO_0000390191" description="NADH-quinone oxidoreductase subunit K">
    <location>
        <begin position="1"/>
        <end position="102"/>
    </location>
</feature>
<feature type="transmembrane region" description="Helical" evidence="1">
    <location>
        <begin position="5"/>
        <end position="25"/>
    </location>
</feature>
<feature type="transmembrane region" description="Helical" evidence="1">
    <location>
        <begin position="31"/>
        <end position="51"/>
    </location>
</feature>
<feature type="transmembrane region" description="Helical" evidence="1">
    <location>
        <begin position="65"/>
        <end position="85"/>
    </location>
</feature>
<name>NUOK_RHILS</name>
<protein>
    <recommendedName>
        <fullName evidence="1">NADH-quinone oxidoreductase subunit K</fullName>
        <ecNumber evidence="1">7.1.1.-</ecNumber>
    </recommendedName>
    <alternativeName>
        <fullName evidence="1">NADH dehydrogenase I subunit K</fullName>
    </alternativeName>
    <alternativeName>
        <fullName evidence="1">NDH-1 subunit K</fullName>
    </alternativeName>
</protein>
<keyword id="KW-0997">Cell inner membrane</keyword>
<keyword id="KW-1003">Cell membrane</keyword>
<keyword id="KW-0472">Membrane</keyword>
<keyword id="KW-0520">NAD</keyword>
<keyword id="KW-0874">Quinone</keyword>
<keyword id="KW-1278">Translocase</keyword>
<keyword id="KW-0812">Transmembrane</keyword>
<keyword id="KW-1133">Transmembrane helix</keyword>
<keyword id="KW-0813">Transport</keyword>
<keyword id="KW-0830">Ubiquinone</keyword>
<accession>C6AUT0</accession>
<organism>
    <name type="scientific">Rhizobium leguminosarum bv. trifolii (strain WSM1325)</name>
    <dbReference type="NCBI Taxonomy" id="395491"/>
    <lineage>
        <taxon>Bacteria</taxon>
        <taxon>Pseudomonadati</taxon>
        <taxon>Pseudomonadota</taxon>
        <taxon>Alphaproteobacteria</taxon>
        <taxon>Hyphomicrobiales</taxon>
        <taxon>Rhizobiaceae</taxon>
        <taxon>Rhizobium/Agrobacterium group</taxon>
        <taxon>Rhizobium</taxon>
    </lineage>
</organism>
<sequence length="102" mass="11034">MVIGLSHYLTVSAILFTLGVFGIFLNRKNVIVILMSIELILLAVNINMVAFSSFLNDIVGQVFALFILTVAAAEAAIGLAILVVFYRNRGSIAVEDVNMMKG</sequence>
<evidence type="ECO:0000255" key="1">
    <source>
        <dbReference type="HAMAP-Rule" id="MF_01456"/>
    </source>
</evidence>